<proteinExistence type="inferred from homology"/>
<evidence type="ECO:0000255" key="1">
    <source>
        <dbReference type="HAMAP-Rule" id="MF_00658"/>
    </source>
</evidence>
<accession>Q03UB1</accession>
<keyword id="KW-0963">Cytoplasm</keyword>
<keyword id="KW-0489">Methyltransferase</keyword>
<keyword id="KW-1185">Reference proteome</keyword>
<keyword id="KW-0698">rRNA processing</keyword>
<keyword id="KW-0949">S-adenosyl-L-methionine</keyword>
<keyword id="KW-0808">Transferase</keyword>
<sequence length="159" mass="18113">MNIKFVVVGKLKEKYFKQGIAEYAKRLSRFCKFSIVEVPDEKAPENLSQAEMDRVMAEEGERILAKIKDREYVYALAILGKERSSEAFAKEIKDLTTYGHSDITFVIGGSLGLTPAVLKRADTQISFGKFTLPHQLMRLVLTEQVYRAFMINEGSPYHK</sequence>
<dbReference type="EC" id="2.1.1.177" evidence="1"/>
<dbReference type="EMBL" id="CP000416">
    <property type="protein sequence ID" value="ABJ63211.1"/>
    <property type="molecule type" value="Genomic_DNA"/>
</dbReference>
<dbReference type="RefSeq" id="WP_011666849.1">
    <property type="nucleotide sequence ID" value="NC_008497.1"/>
</dbReference>
<dbReference type="SMR" id="Q03UB1"/>
<dbReference type="STRING" id="387344.LVIS_0035"/>
<dbReference type="GeneID" id="56991826"/>
<dbReference type="KEGG" id="lbr:LVIS_0035"/>
<dbReference type="eggNOG" id="COG1576">
    <property type="taxonomic scope" value="Bacteria"/>
</dbReference>
<dbReference type="HOGENOM" id="CLU_100552_0_0_9"/>
<dbReference type="Proteomes" id="UP000001652">
    <property type="component" value="Chromosome"/>
</dbReference>
<dbReference type="GO" id="GO:0005737">
    <property type="term" value="C:cytoplasm"/>
    <property type="evidence" value="ECO:0007669"/>
    <property type="project" value="UniProtKB-SubCell"/>
</dbReference>
<dbReference type="GO" id="GO:0070038">
    <property type="term" value="F:rRNA (pseudouridine-N3-)-methyltransferase activity"/>
    <property type="evidence" value="ECO:0007669"/>
    <property type="project" value="UniProtKB-UniRule"/>
</dbReference>
<dbReference type="CDD" id="cd18081">
    <property type="entry name" value="RlmH-like"/>
    <property type="match status" value="1"/>
</dbReference>
<dbReference type="Gene3D" id="3.40.1280.10">
    <property type="match status" value="1"/>
</dbReference>
<dbReference type="HAMAP" id="MF_00658">
    <property type="entry name" value="23SrRNA_methyltr_H"/>
    <property type="match status" value="1"/>
</dbReference>
<dbReference type="InterPro" id="IPR029028">
    <property type="entry name" value="Alpha/beta_knot_MTases"/>
</dbReference>
<dbReference type="InterPro" id="IPR003742">
    <property type="entry name" value="RlmH-like"/>
</dbReference>
<dbReference type="InterPro" id="IPR029026">
    <property type="entry name" value="tRNA_m1G_MTases_N"/>
</dbReference>
<dbReference type="NCBIfam" id="NF000985">
    <property type="entry name" value="PRK00103.1-3"/>
    <property type="match status" value="1"/>
</dbReference>
<dbReference type="NCBIfam" id="TIGR00246">
    <property type="entry name" value="tRNA_RlmH_YbeA"/>
    <property type="match status" value="1"/>
</dbReference>
<dbReference type="PANTHER" id="PTHR33603">
    <property type="entry name" value="METHYLTRANSFERASE"/>
    <property type="match status" value="1"/>
</dbReference>
<dbReference type="PANTHER" id="PTHR33603:SF1">
    <property type="entry name" value="RIBOSOMAL RNA LARGE SUBUNIT METHYLTRANSFERASE H"/>
    <property type="match status" value="1"/>
</dbReference>
<dbReference type="Pfam" id="PF02590">
    <property type="entry name" value="SPOUT_MTase"/>
    <property type="match status" value="1"/>
</dbReference>
<dbReference type="PIRSF" id="PIRSF004505">
    <property type="entry name" value="MT_bac"/>
    <property type="match status" value="1"/>
</dbReference>
<dbReference type="SUPFAM" id="SSF75217">
    <property type="entry name" value="alpha/beta knot"/>
    <property type="match status" value="1"/>
</dbReference>
<feature type="chain" id="PRO_1000061793" description="Ribosomal RNA large subunit methyltransferase H">
    <location>
        <begin position="1"/>
        <end position="159"/>
    </location>
</feature>
<feature type="binding site" evidence="1">
    <location>
        <position position="76"/>
    </location>
    <ligand>
        <name>S-adenosyl-L-methionine</name>
        <dbReference type="ChEBI" id="CHEBI:59789"/>
    </ligand>
</feature>
<feature type="binding site" evidence="1">
    <location>
        <position position="108"/>
    </location>
    <ligand>
        <name>S-adenosyl-L-methionine</name>
        <dbReference type="ChEBI" id="CHEBI:59789"/>
    </ligand>
</feature>
<name>RLMH_LEVBA</name>
<reference key="1">
    <citation type="journal article" date="2006" name="Proc. Natl. Acad. Sci. U.S.A.">
        <title>Comparative genomics of the lactic acid bacteria.</title>
        <authorList>
            <person name="Makarova K.S."/>
            <person name="Slesarev A."/>
            <person name="Wolf Y.I."/>
            <person name="Sorokin A."/>
            <person name="Mirkin B."/>
            <person name="Koonin E.V."/>
            <person name="Pavlov A."/>
            <person name="Pavlova N."/>
            <person name="Karamychev V."/>
            <person name="Polouchine N."/>
            <person name="Shakhova V."/>
            <person name="Grigoriev I."/>
            <person name="Lou Y."/>
            <person name="Rohksar D."/>
            <person name="Lucas S."/>
            <person name="Huang K."/>
            <person name="Goodstein D.M."/>
            <person name="Hawkins T."/>
            <person name="Plengvidhya V."/>
            <person name="Welker D."/>
            <person name="Hughes J."/>
            <person name="Goh Y."/>
            <person name="Benson A."/>
            <person name="Baldwin K."/>
            <person name="Lee J.-H."/>
            <person name="Diaz-Muniz I."/>
            <person name="Dosti B."/>
            <person name="Smeianov V."/>
            <person name="Wechter W."/>
            <person name="Barabote R."/>
            <person name="Lorca G."/>
            <person name="Altermann E."/>
            <person name="Barrangou R."/>
            <person name="Ganesan B."/>
            <person name="Xie Y."/>
            <person name="Rawsthorne H."/>
            <person name="Tamir D."/>
            <person name="Parker C."/>
            <person name="Breidt F."/>
            <person name="Broadbent J.R."/>
            <person name="Hutkins R."/>
            <person name="O'Sullivan D."/>
            <person name="Steele J."/>
            <person name="Unlu G."/>
            <person name="Saier M.H. Jr."/>
            <person name="Klaenhammer T."/>
            <person name="Richardson P."/>
            <person name="Kozyavkin S."/>
            <person name="Weimer B.C."/>
            <person name="Mills D.A."/>
        </authorList>
    </citation>
    <scope>NUCLEOTIDE SEQUENCE [LARGE SCALE GENOMIC DNA]</scope>
    <source>
        <strain>ATCC 367 / BCRC 12310 / CIP 105137 / JCM 1170 / LMG 11437 / NCIMB 947 / NCTC 947</strain>
    </source>
</reference>
<protein>
    <recommendedName>
        <fullName evidence="1">Ribosomal RNA large subunit methyltransferase H</fullName>
        <ecNumber evidence="1">2.1.1.177</ecNumber>
    </recommendedName>
    <alternativeName>
        <fullName evidence="1">23S rRNA (pseudouridine1915-N3)-methyltransferase</fullName>
    </alternativeName>
    <alternativeName>
        <fullName evidence="1">23S rRNA m3Psi1915 methyltransferase</fullName>
    </alternativeName>
    <alternativeName>
        <fullName evidence="1">rRNA (pseudouridine-N3-)-methyltransferase RlmH</fullName>
    </alternativeName>
</protein>
<gene>
    <name evidence="1" type="primary">rlmH</name>
    <name type="ordered locus">LVIS_0035</name>
</gene>
<organism>
    <name type="scientific">Levilactobacillus brevis (strain ATCC 367 / BCRC 12310 / CIP 105137 / JCM 1170 / LMG 11437 / NCIMB 947 / NCTC 947)</name>
    <name type="common">Lactobacillus brevis</name>
    <dbReference type="NCBI Taxonomy" id="387344"/>
    <lineage>
        <taxon>Bacteria</taxon>
        <taxon>Bacillati</taxon>
        <taxon>Bacillota</taxon>
        <taxon>Bacilli</taxon>
        <taxon>Lactobacillales</taxon>
        <taxon>Lactobacillaceae</taxon>
        <taxon>Levilactobacillus</taxon>
    </lineage>
</organism>
<comment type="function">
    <text evidence="1">Specifically methylates the pseudouridine at position 1915 (m3Psi1915) in 23S rRNA.</text>
</comment>
<comment type="catalytic activity">
    <reaction evidence="1">
        <text>pseudouridine(1915) in 23S rRNA + S-adenosyl-L-methionine = N(3)-methylpseudouridine(1915) in 23S rRNA + S-adenosyl-L-homocysteine + H(+)</text>
        <dbReference type="Rhea" id="RHEA:42752"/>
        <dbReference type="Rhea" id="RHEA-COMP:10221"/>
        <dbReference type="Rhea" id="RHEA-COMP:10222"/>
        <dbReference type="ChEBI" id="CHEBI:15378"/>
        <dbReference type="ChEBI" id="CHEBI:57856"/>
        <dbReference type="ChEBI" id="CHEBI:59789"/>
        <dbReference type="ChEBI" id="CHEBI:65314"/>
        <dbReference type="ChEBI" id="CHEBI:74486"/>
        <dbReference type="EC" id="2.1.1.177"/>
    </reaction>
</comment>
<comment type="subunit">
    <text evidence="1">Homodimer.</text>
</comment>
<comment type="subcellular location">
    <subcellularLocation>
        <location evidence="1">Cytoplasm</location>
    </subcellularLocation>
</comment>
<comment type="similarity">
    <text evidence="1">Belongs to the RNA methyltransferase RlmH family.</text>
</comment>